<keyword id="KW-0963">Cytoplasm</keyword>
<keyword id="KW-0694">RNA-binding</keyword>
<protein>
    <recommendedName>
        <fullName evidence="1">SsrA-binding protein</fullName>
    </recommendedName>
    <alternativeName>
        <fullName evidence="1">Small protein B</fullName>
    </alternativeName>
</protein>
<name>SSRP_XANE5</name>
<accession>Q3BVC6</accession>
<feature type="chain" id="PRO_1000002184" description="SsrA-binding protein">
    <location>
        <begin position="1"/>
        <end position="167"/>
    </location>
</feature>
<feature type="region of interest" description="Disordered" evidence="2">
    <location>
        <begin position="139"/>
        <end position="167"/>
    </location>
</feature>
<feature type="compositionally biased region" description="Basic and acidic residues" evidence="2">
    <location>
        <begin position="139"/>
        <end position="158"/>
    </location>
</feature>
<reference key="1">
    <citation type="journal article" date="2005" name="J. Bacteriol.">
        <title>Insights into genome plasticity and pathogenicity of the plant pathogenic Bacterium Xanthomonas campestris pv. vesicatoria revealed by the complete genome sequence.</title>
        <authorList>
            <person name="Thieme F."/>
            <person name="Koebnik R."/>
            <person name="Bekel T."/>
            <person name="Berger C."/>
            <person name="Boch J."/>
            <person name="Buettner D."/>
            <person name="Caldana C."/>
            <person name="Gaigalat L."/>
            <person name="Goesmann A."/>
            <person name="Kay S."/>
            <person name="Kirchner O."/>
            <person name="Lanz C."/>
            <person name="Linke B."/>
            <person name="McHardy A.C."/>
            <person name="Meyer F."/>
            <person name="Mittenhuber G."/>
            <person name="Nies D.H."/>
            <person name="Niesbach-Kloesgen U."/>
            <person name="Patschkowski T."/>
            <person name="Rueckert C."/>
            <person name="Rupp O."/>
            <person name="Schneiker S."/>
            <person name="Schuster S.C."/>
            <person name="Vorhoelter F.J."/>
            <person name="Weber E."/>
            <person name="Puehler A."/>
            <person name="Bonas U."/>
            <person name="Bartels D."/>
            <person name="Kaiser O."/>
        </authorList>
    </citation>
    <scope>NUCLEOTIDE SEQUENCE [LARGE SCALE GENOMIC DNA]</scope>
    <source>
        <strain>85-10</strain>
    </source>
</reference>
<dbReference type="EMBL" id="AM039952">
    <property type="protein sequence ID" value="CAJ23188.1"/>
    <property type="molecule type" value="Genomic_DNA"/>
</dbReference>
<dbReference type="RefSeq" id="WP_005913721.1">
    <property type="nucleotide sequence ID" value="NZ_CP017190.1"/>
</dbReference>
<dbReference type="SMR" id="Q3BVC6"/>
<dbReference type="STRING" id="456327.BJD11_14850"/>
<dbReference type="GeneID" id="97509890"/>
<dbReference type="KEGG" id="xcv:XCV1556"/>
<dbReference type="eggNOG" id="COG0691">
    <property type="taxonomic scope" value="Bacteria"/>
</dbReference>
<dbReference type="HOGENOM" id="CLU_108953_3_0_6"/>
<dbReference type="Proteomes" id="UP000007069">
    <property type="component" value="Chromosome"/>
</dbReference>
<dbReference type="GO" id="GO:0005829">
    <property type="term" value="C:cytosol"/>
    <property type="evidence" value="ECO:0007669"/>
    <property type="project" value="TreeGrafter"/>
</dbReference>
<dbReference type="GO" id="GO:0003723">
    <property type="term" value="F:RNA binding"/>
    <property type="evidence" value="ECO:0007669"/>
    <property type="project" value="UniProtKB-UniRule"/>
</dbReference>
<dbReference type="GO" id="GO:0070929">
    <property type="term" value="P:trans-translation"/>
    <property type="evidence" value="ECO:0007669"/>
    <property type="project" value="UniProtKB-UniRule"/>
</dbReference>
<dbReference type="CDD" id="cd09294">
    <property type="entry name" value="SmpB"/>
    <property type="match status" value="1"/>
</dbReference>
<dbReference type="Gene3D" id="2.40.280.10">
    <property type="match status" value="1"/>
</dbReference>
<dbReference type="HAMAP" id="MF_00023">
    <property type="entry name" value="SmpB"/>
    <property type="match status" value="1"/>
</dbReference>
<dbReference type="InterPro" id="IPR023620">
    <property type="entry name" value="SmpB"/>
</dbReference>
<dbReference type="InterPro" id="IPR000037">
    <property type="entry name" value="SsrA-bd_prot"/>
</dbReference>
<dbReference type="InterPro" id="IPR020081">
    <property type="entry name" value="SsrA-bd_prot_CS"/>
</dbReference>
<dbReference type="NCBIfam" id="NF003843">
    <property type="entry name" value="PRK05422.1"/>
    <property type="match status" value="1"/>
</dbReference>
<dbReference type="NCBIfam" id="TIGR00086">
    <property type="entry name" value="smpB"/>
    <property type="match status" value="1"/>
</dbReference>
<dbReference type="PANTHER" id="PTHR30308:SF2">
    <property type="entry name" value="SSRA-BINDING PROTEIN"/>
    <property type="match status" value="1"/>
</dbReference>
<dbReference type="PANTHER" id="PTHR30308">
    <property type="entry name" value="TMRNA-BINDING COMPONENT OF TRANS-TRANSLATION TAGGING COMPLEX"/>
    <property type="match status" value="1"/>
</dbReference>
<dbReference type="Pfam" id="PF01668">
    <property type="entry name" value="SmpB"/>
    <property type="match status" value="1"/>
</dbReference>
<dbReference type="SUPFAM" id="SSF74982">
    <property type="entry name" value="Small protein B (SmpB)"/>
    <property type="match status" value="1"/>
</dbReference>
<dbReference type="PROSITE" id="PS01317">
    <property type="entry name" value="SSRP"/>
    <property type="match status" value="1"/>
</dbReference>
<sequence length="167" mass="19269">MSKKQTKDKANGAKATKTIALNKRARHEYHLEERYEAGLALQGWEVKAIRAGRANIVDGYAYVRSGEIYLIGAQITPLIQASTHTVPVERRDRKLLLHRAEIDKVLTRVEREGYTLVPTALYWSSNKVKLEIALAKGKQNHDKRDAAKDRDWQRDKQRVMRRHNRDA</sequence>
<gene>
    <name evidence="1" type="primary">smpB</name>
    <name type="ordered locus">XCV1556</name>
</gene>
<comment type="function">
    <text evidence="1">Required for rescue of stalled ribosomes mediated by trans-translation. Binds to transfer-messenger RNA (tmRNA), required for stable association of tmRNA with ribosomes. tmRNA and SmpB together mimic tRNA shape, replacing the anticodon stem-loop with SmpB. tmRNA is encoded by the ssrA gene; the 2 termini fold to resemble tRNA(Ala) and it encodes a 'tag peptide', a short internal open reading frame. During trans-translation Ala-aminoacylated tmRNA acts like a tRNA, entering the A-site of stalled ribosomes, displacing the stalled mRNA. The ribosome then switches to translate the ORF on the tmRNA; the nascent peptide is terminated with the 'tag peptide' encoded by the tmRNA and targeted for degradation. The ribosome is freed to recommence translation, which seems to be the essential function of trans-translation.</text>
</comment>
<comment type="subcellular location">
    <subcellularLocation>
        <location evidence="1">Cytoplasm</location>
    </subcellularLocation>
    <text evidence="1">The tmRNA-SmpB complex associates with stalled 70S ribosomes.</text>
</comment>
<comment type="similarity">
    <text evidence="1">Belongs to the SmpB family.</text>
</comment>
<organism>
    <name type="scientific">Xanthomonas euvesicatoria pv. vesicatoria (strain 85-10)</name>
    <name type="common">Xanthomonas campestris pv. vesicatoria</name>
    <dbReference type="NCBI Taxonomy" id="316273"/>
    <lineage>
        <taxon>Bacteria</taxon>
        <taxon>Pseudomonadati</taxon>
        <taxon>Pseudomonadota</taxon>
        <taxon>Gammaproteobacteria</taxon>
        <taxon>Lysobacterales</taxon>
        <taxon>Lysobacteraceae</taxon>
        <taxon>Xanthomonas</taxon>
    </lineage>
</organism>
<evidence type="ECO:0000255" key="1">
    <source>
        <dbReference type="HAMAP-Rule" id="MF_00023"/>
    </source>
</evidence>
<evidence type="ECO:0000256" key="2">
    <source>
        <dbReference type="SAM" id="MobiDB-lite"/>
    </source>
</evidence>
<proteinExistence type="inferred from homology"/>